<dbReference type="EMBL" id="AL683822">
    <property type="status" value="NOT_ANNOTATED_CDS"/>
    <property type="molecule type" value="Genomic_DNA"/>
</dbReference>
<dbReference type="EMBL" id="BC117923">
    <property type="protein sequence ID" value="AAI17924.1"/>
    <property type="molecule type" value="mRNA"/>
</dbReference>
<dbReference type="EMBL" id="BC117924">
    <property type="protein sequence ID" value="AAI17925.1"/>
    <property type="molecule type" value="mRNA"/>
</dbReference>
<dbReference type="EMBL" id="AK081764">
    <property type="protein sequence ID" value="BAC38324.1"/>
    <property type="molecule type" value="mRNA"/>
</dbReference>
<dbReference type="CCDS" id="CCDS53191.1"/>
<dbReference type="RefSeq" id="NP_001156487.1">
    <property type="nucleotide sequence ID" value="NM_001163015.2"/>
</dbReference>
<dbReference type="RefSeq" id="NP_001156488.1">
    <property type="nucleotide sequence ID" value="NM_001163016.2"/>
</dbReference>
<dbReference type="RefSeq" id="NP_001156489.1">
    <property type="nucleotide sequence ID" value="NM_001163017.2"/>
</dbReference>
<dbReference type="RefSeq" id="NP_001346300.1">
    <property type="nucleotide sequence ID" value="NM_001359371.2"/>
</dbReference>
<dbReference type="RefSeq" id="XP_017173986.1">
    <property type="nucleotide sequence ID" value="XM_017318497.1"/>
</dbReference>
<dbReference type="RefSeq" id="XP_030107202.1">
    <property type="nucleotide sequence ID" value="XM_030251342.1"/>
</dbReference>
<dbReference type="RefSeq" id="XP_030107203.1">
    <property type="nucleotide sequence ID" value="XM_030251343.1"/>
</dbReference>
<dbReference type="RefSeq" id="XP_036017854.1">
    <property type="nucleotide sequence ID" value="XM_036161961.1"/>
</dbReference>
<dbReference type="RefSeq" id="XP_036017855.1">
    <property type="nucleotide sequence ID" value="XM_036161962.1"/>
</dbReference>
<dbReference type="FunCoup" id="Q8BUY8">
    <property type="interactions" value="566"/>
</dbReference>
<dbReference type="STRING" id="10090.ENSMUSP00000134666"/>
<dbReference type="GlyGen" id="Q8BUY8">
    <property type="glycosylation" value="2 sites, 1 O-linked glycan (1 site)"/>
</dbReference>
<dbReference type="iPTMnet" id="Q8BUY8"/>
<dbReference type="PhosphoSitePlus" id="Q8BUY8"/>
<dbReference type="jPOST" id="Q8BUY8"/>
<dbReference type="PaxDb" id="10090-ENSMUSP00000134666"/>
<dbReference type="PeptideAtlas" id="Q8BUY8"/>
<dbReference type="ProteomicsDB" id="267421"/>
<dbReference type="Antibodypedia" id="351">
    <property type="antibodies" value="191 antibodies from 27 providers"/>
</dbReference>
<dbReference type="Ensembl" id="ENSMUST00000113136.8">
    <property type="protein sequence ID" value="ENSMUSP00000108761.2"/>
    <property type="gene ID" value="ENSMUSG00000072966.12"/>
</dbReference>
<dbReference type="Ensembl" id="ENSMUST00000173804.8">
    <property type="protein sequence ID" value="ENSMUSP00000134666.2"/>
    <property type="gene ID" value="ENSMUSG00000072966.12"/>
</dbReference>
<dbReference type="GeneID" id="245607"/>
<dbReference type="KEGG" id="mmu:245607"/>
<dbReference type="UCSC" id="uc009uhs.2">
    <property type="organism name" value="mouse"/>
</dbReference>
<dbReference type="AGR" id="MGI:2442071"/>
<dbReference type="CTD" id="114928"/>
<dbReference type="MGI" id="MGI:2442071">
    <property type="gene designation" value="Gprasp2"/>
</dbReference>
<dbReference type="VEuPathDB" id="HostDB:ENSMUSG00000072966"/>
<dbReference type="eggNOG" id="ENOG502S6CE">
    <property type="taxonomic scope" value="Eukaryota"/>
</dbReference>
<dbReference type="GeneTree" id="ENSGT00940000162726"/>
<dbReference type="HOGENOM" id="CLU_017437_0_0_1"/>
<dbReference type="InParanoid" id="Q8BUY8"/>
<dbReference type="OMA" id="WPREEAN"/>
<dbReference type="OrthoDB" id="9832412at2759"/>
<dbReference type="PhylomeDB" id="Q8BUY8"/>
<dbReference type="TreeFam" id="TF335652"/>
<dbReference type="BioGRID-ORCS" id="245607">
    <property type="hits" value="1 hit in 76 CRISPR screens"/>
</dbReference>
<dbReference type="ChiTaRS" id="Gprasp2">
    <property type="organism name" value="mouse"/>
</dbReference>
<dbReference type="PRO" id="PR:Q8BUY8"/>
<dbReference type="Proteomes" id="UP000000589">
    <property type="component" value="Chromosome X"/>
</dbReference>
<dbReference type="RNAct" id="Q8BUY8">
    <property type="molecule type" value="protein"/>
</dbReference>
<dbReference type="Bgee" id="ENSMUSG00000072966">
    <property type="expression patterns" value="Expressed in subparaventricular zone and 193 other cell types or tissues"/>
</dbReference>
<dbReference type="GO" id="GO:0005737">
    <property type="term" value="C:cytoplasm"/>
    <property type="evidence" value="ECO:0007669"/>
    <property type="project" value="Ensembl"/>
</dbReference>
<dbReference type="GO" id="GO:0005634">
    <property type="term" value="C:nucleus"/>
    <property type="evidence" value="ECO:0000266"/>
    <property type="project" value="MGI"/>
</dbReference>
<dbReference type="GO" id="GO:0001540">
    <property type="term" value="F:amyloid-beta binding"/>
    <property type="evidence" value="ECO:0000314"/>
    <property type="project" value="MGI"/>
</dbReference>
<dbReference type="GO" id="GO:0001664">
    <property type="term" value="F:G protein-coupled receptor binding"/>
    <property type="evidence" value="ECO:0000266"/>
    <property type="project" value="MGI"/>
</dbReference>
<dbReference type="GO" id="GO:0061484">
    <property type="term" value="P:hematopoietic stem cell homeostasis"/>
    <property type="evidence" value="ECO:0000315"/>
    <property type="project" value="MGI"/>
</dbReference>
<dbReference type="FunFam" id="1.25.10.10:FF:000258">
    <property type="entry name" value="G-protein coupled receptor-associated sorting protein 2"/>
    <property type="match status" value="1"/>
</dbReference>
<dbReference type="Gene3D" id="1.25.10.10">
    <property type="entry name" value="Leucine-rich Repeat Variant"/>
    <property type="match status" value="1"/>
</dbReference>
<dbReference type="InterPro" id="IPR011989">
    <property type="entry name" value="ARM-like"/>
</dbReference>
<dbReference type="InterPro" id="IPR006911">
    <property type="entry name" value="ARM-rpt_dom"/>
</dbReference>
<dbReference type="InterPro" id="IPR016024">
    <property type="entry name" value="ARM-type_fold"/>
</dbReference>
<dbReference type="InterPro" id="IPR043374">
    <property type="entry name" value="GASP1-3"/>
</dbReference>
<dbReference type="PANTHER" id="PTHR46414:SF1">
    <property type="entry name" value="G-PROTEIN COUPLED RECEPTOR-ASSOCIATED SORTING PROTEIN 2"/>
    <property type="match status" value="1"/>
</dbReference>
<dbReference type="PANTHER" id="PTHR46414">
    <property type="entry name" value="PROTEIN BHLHB9-RELATED"/>
    <property type="match status" value="1"/>
</dbReference>
<dbReference type="Pfam" id="PF04826">
    <property type="entry name" value="Arm_2"/>
    <property type="match status" value="1"/>
</dbReference>
<dbReference type="SUPFAM" id="SSF48371">
    <property type="entry name" value="ARM repeat"/>
    <property type="match status" value="1"/>
</dbReference>
<sequence length="826" mass="92802">MTGAEVETGSQAKPDKKPQEEVAGGAERESEAPLVVRPKVRPQAPATSGARPKTETKSSSRARPKTETQSVSGTRHRMSGARPRSEAQLMSGARPKTDARAVGGARPKTEAKPIPGARPKGDAQAWAHSEFGAEAMPRAERAHLSNSVTWPPVNVGSATVTKSKSLSMNTELASMGSEIFSGTQGQPGIEPWFGPREEANMGSWCYPRPRAREETSNESADENSTMSSFWTREETSIRSWPREEVNTRSRHRAKHQTNARSKPRSKQDPYIDSLSGSEDEASNPFCFWAGENTNDMFRARGRDEANARPKIRTKREDYFEDEDEIYKESWLLPGEEGNRFRRRDKEEPNKTLKNENEKDVKNDETVEQESRLEEEVIIGSWFWAEQETNVEAGASAICDAEPGAEEGAIGGSLFWTEEKPSLGAVARDEVRPESEEEALFGSWFWDRDEACFDPNPTPVYTAKSRYRDPEEDLNLASRPKTWDEVTIEFKPPCHGLGFPSPRPFIIPEGASGNSEEKAKNAELGAEGEEQDSVAQRDLPEPEFPFQYDPSYRSVQEIREHLKARESAQPENWSCTCIQCELRISSAEFEELLLLMDRIRDPFIHEIAKIAMGMRTASQFTRDFIRDSGVVSLIEALMNYPSSRVRTNFLENMVHMAPPYPNLNMIETFICQVCEETLSHSVNSPEQLTGMRMLRHLTITTDYHVLIANYVSGFLALLTTGDARTKFHVLKMLLNLSDNPMVAKKLFSAKALSIFVGLFNIEETNDNIQIVIKMFQNISNIVKSGAMSLLDDDFSLEPLVSAFHEFEELAKQLQIQIDNQNDPEEGQ</sequence>
<evidence type="ECO:0000250" key="1">
    <source>
        <dbReference type="UniProtKB" id="Q96D09"/>
    </source>
</evidence>
<evidence type="ECO:0000256" key="2">
    <source>
        <dbReference type="SAM" id="MobiDB-lite"/>
    </source>
</evidence>
<evidence type="ECO:0000269" key="3">
    <source>
    </source>
</evidence>
<evidence type="ECO:0000305" key="4"/>
<evidence type="ECO:0007744" key="5">
    <source>
    </source>
</evidence>
<feature type="chain" id="PRO_0000239054" description="G-protein coupled receptor-associated sorting protein 2">
    <location>
        <begin position="1"/>
        <end position="826"/>
    </location>
</feature>
<feature type="region of interest" description="Disordered" evidence="2">
    <location>
        <begin position="1"/>
        <end position="126"/>
    </location>
</feature>
<feature type="region of interest" description="Disordered" evidence="2">
    <location>
        <begin position="204"/>
        <end position="286"/>
    </location>
</feature>
<feature type="region of interest" description="Disordered" evidence="2">
    <location>
        <begin position="336"/>
        <end position="371"/>
    </location>
</feature>
<feature type="region of interest" description="Disordered" evidence="2">
    <location>
        <begin position="506"/>
        <end position="534"/>
    </location>
</feature>
<feature type="compositionally biased region" description="Basic and acidic residues" evidence="2">
    <location>
        <begin position="13"/>
        <end position="31"/>
    </location>
</feature>
<feature type="compositionally biased region" description="Polar residues" evidence="2">
    <location>
        <begin position="59"/>
        <end position="73"/>
    </location>
</feature>
<feature type="compositionally biased region" description="Basic and acidic residues" evidence="2">
    <location>
        <begin position="231"/>
        <end position="247"/>
    </location>
</feature>
<feature type="compositionally biased region" description="Basic residues" evidence="2">
    <location>
        <begin position="248"/>
        <end position="264"/>
    </location>
</feature>
<feature type="modified residue" description="Phosphoserine" evidence="5">
    <location>
        <position position="275"/>
    </location>
</feature>
<feature type="modified residue" description="Phosphoserine" evidence="5">
    <location>
        <position position="277"/>
    </location>
</feature>
<proteinExistence type="evidence at protein level"/>
<reference key="1">
    <citation type="journal article" date="2009" name="PLoS Biol.">
        <title>Lineage-specific biology revealed by a finished genome assembly of the mouse.</title>
        <authorList>
            <person name="Church D.M."/>
            <person name="Goodstadt L."/>
            <person name="Hillier L.W."/>
            <person name="Zody M.C."/>
            <person name="Goldstein S."/>
            <person name="She X."/>
            <person name="Bult C.J."/>
            <person name="Agarwala R."/>
            <person name="Cherry J.L."/>
            <person name="DiCuccio M."/>
            <person name="Hlavina W."/>
            <person name="Kapustin Y."/>
            <person name="Meric P."/>
            <person name="Maglott D."/>
            <person name="Birtle Z."/>
            <person name="Marques A.C."/>
            <person name="Graves T."/>
            <person name="Zhou S."/>
            <person name="Teague B."/>
            <person name="Potamousis K."/>
            <person name="Churas C."/>
            <person name="Place M."/>
            <person name="Herschleb J."/>
            <person name="Runnheim R."/>
            <person name="Forrest D."/>
            <person name="Amos-Landgraf J."/>
            <person name="Schwartz D.C."/>
            <person name="Cheng Z."/>
            <person name="Lindblad-Toh K."/>
            <person name="Eichler E.E."/>
            <person name="Ponting C.P."/>
        </authorList>
    </citation>
    <scope>NUCLEOTIDE SEQUENCE [LARGE SCALE GENOMIC DNA]</scope>
    <source>
        <strain>C57BL/6J</strain>
    </source>
</reference>
<reference key="2">
    <citation type="journal article" date="2004" name="Genome Res.">
        <title>The status, quality, and expansion of the NIH full-length cDNA project: the Mammalian Gene Collection (MGC).</title>
        <authorList>
            <consortium name="The MGC Project Team"/>
        </authorList>
    </citation>
    <scope>NUCLEOTIDE SEQUENCE [LARGE SCALE MRNA]</scope>
</reference>
<reference key="3">
    <citation type="journal article" date="2005" name="Science">
        <title>The transcriptional landscape of the mammalian genome.</title>
        <authorList>
            <person name="Carninci P."/>
            <person name="Kasukawa T."/>
            <person name="Katayama S."/>
            <person name="Gough J."/>
            <person name="Frith M.C."/>
            <person name="Maeda N."/>
            <person name="Oyama R."/>
            <person name="Ravasi T."/>
            <person name="Lenhard B."/>
            <person name="Wells C."/>
            <person name="Kodzius R."/>
            <person name="Shimokawa K."/>
            <person name="Bajic V.B."/>
            <person name="Brenner S.E."/>
            <person name="Batalov S."/>
            <person name="Forrest A.R."/>
            <person name="Zavolan M."/>
            <person name="Davis M.J."/>
            <person name="Wilming L.G."/>
            <person name="Aidinis V."/>
            <person name="Allen J.E."/>
            <person name="Ambesi-Impiombato A."/>
            <person name="Apweiler R."/>
            <person name="Aturaliya R.N."/>
            <person name="Bailey T.L."/>
            <person name="Bansal M."/>
            <person name="Baxter L."/>
            <person name="Beisel K.W."/>
            <person name="Bersano T."/>
            <person name="Bono H."/>
            <person name="Chalk A.M."/>
            <person name="Chiu K.P."/>
            <person name="Choudhary V."/>
            <person name="Christoffels A."/>
            <person name="Clutterbuck D.R."/>
            <person name="Crowe M.L."/>
            <person name="Dalla E."/>
            <person name="Dalrymple B.P."/>
            <person name="de Bono B."/>
            <person name="Della Gatta G."/>
            <person name="di Bernardo D."/>
            <person name="Down T."/>
            <person name="Engstrom P."/>
            <person name="Fagiolini M."/>
            <person name="Faulkner G."/>
            <person name="Fletcher C.F."/>
            <person name="Fukushima T."/>
            <person name="Furuno M."/>
            <person name="Futaki S."/>
            <person name="Gariboldi M."/>
            <person name="Georgii-Hemming P."/>
            <person name="Gingeras T.R."/>
            <person name="Gojobori T."/>
            <person name="Green R.E."/>
            <person name="Gustincich S."/>
            <person name="Harbers M."/>
            <person name="Hayashi Y."/>
            <person name="Hensch T.K."/>
            <person name="Hirokawa N."/>
            <person name="Hill D."/>
            <person name="Huminiecki L."/>
            <person name="Iacono M."/>
            <person name="Ikeo K."/>
            <person name="Iwama A."/>
            <person name="Ishikawa T."/>
            <person name="Jakt M."/>
            <person name="Kanapin A."/>
            <person name="Katoh M."/>
            <person name="Kawasawa Y."/>
            <person name="Kelso J."/>
            <person name="Kitamura H."/>
            <person name="Kitano H."/>
            <person name="Kollias G."/>
            <person name="Krishnan S.P."/>
            <person name="Kruger A."/>
            <person name="Kummerfeld S.K."/>
            <person name="Kurochkin I.V."/>
            <person name="Lareau L.F."/>
            <person name="Lazarevic D."/>
            <person name="Lipovich L."/>
            <person name="Liu J."/>
            <person name="Liuni S."/>
            <person name="McWilliam S."/>
            <person name="Madan Babu M."/>
            <person name="Madera M."/>
            <person name="Marchionni L."/>
            <person name="Matsuda H."/>
            <person name="Matsuzawa S."/>
            <person name="Miki H."/>
            <person name="Mignone F."/>
            <person name="Miyake S."/>
            <person name="Morris K."/>
            <person name="Mottagui-Tabar S."/>
            <person name="Mulder N."/>
            <person name="Nakano N."/>
            <person name="Nakauchi H."/>
            <person name="Ng P."/>
            <person name="Nilsson R."/>
            <person name="Nishiguchi S."/>
            <person name="Nishikawa S."/>
            <person name="Nori F."/>
            <person name="Ohara O."/>
            <person name="Okazaki Y."/>
            <person name="Orlando V."/>
            <person name="Pang K.C."/>
            <person name="Pavan W.J."/>
            <person name="Pavesi G."/>
            <person name="Pesole G."/>
            <person name="Petrovsky N."/>
            <person name="Piazza S."/>
            <person name="Reed J."/>
            <person name="Reid J.F."/>
            <person name="Ring B.Z."/>
            <person name="Ringwald M."/>
            <person name="Rost B."/>
            <person name="Ruan Y."/>
            <person name="Salzberg S.L."/>
            <person name="Sandelin A."/>
            <person name="Schneider C."/>
            <person name="Schoenbach C."/>
            <person name="Sekiguchi K."/>
            <person name="Semple C.A."/>
            <person name="Seno S."/>
            <person name="Sessa L."/>
            <person name="Sheng Y."/>
            <person name="Shibata Y."/>
            <person name="Shimada H."/>
            <person name="Shimada K."/>
            <person name="Silva D."/>
            <person name="Sinclair B."/>
            <person name="Sperling S."/>
            <person name="Stupka E."/>
            <person name="Sugiura K."/>
            <person name="Sultana R."/>
            <person name="Takenaka Y."/>
            <person name="Taki K."/>
            <person name="Tammoja K."/>
            <person name="Tan S.L."/>
            <person name="Tang S."/>
            <person name="Taylor M.S."/>
            <person name="Tegner J."/>
            <person name="Teichmann S.A."/>
            <person name="Ueda H.R."/>
            <person name="van Nimwegen E."/>
            <person name="Verardo R."/>
            <person name="Wei C.L."/>
            <person name="Yagi K."/>
            <person name="Yamanishi H."/>
            <person name="Zabarovsky E."/>
            <person name="Zhu S."/>
            <person name="Zimmer A."/>
            <person name="Hide W."/>
            <person name="Bult C."/>
            <person name="Grimmond S.M."/>
            <person name="Teasdale R.D."/>
            <person name="Liu E.T."/>
            <person name="Brusic V."/>
            <person name="Quackenbush J."/>
            <person name="Wahlestedt C."/>
            <person name="Mattick J.S."/>
            <person name="Hume D.A."/>
            <person name="Kai C."/>
            <person name="Sasaki D."/>
            <person name="Tomaru Y."/>
            <person name="Fukuda S."/>
            <person name="Kanamori-Katayama M."/>
            <person name="Suzuki M."/>
            <person name="Aoki J."/>
            <person name="Arakawa T."/>
            <person name="Iida J."/>
            <person name="Imamura K."/>
            <person name="Itoh M."/>
            <person name="Kato T."/>
            <person name="Kawaji H."/>
            <person name="Kawagashira N."/>
            <person name="Kawashima T."/>
            <person name="Kojima M."/>
            <person name="Kondo S."/>
            <person name="Konno H."/>
            <person name="Nakano K."/>
            <person name="Ninomiya N."/>
            <person name="Nishio T."/>
            <person name="Okada M."/>
            <person name="Plessy C."/>
            <person name="Shibata K."/>
            <person name="Shiraki T."/>
            <person name="Suzuki S."/>
            <person name="Tagami M."/>
            <person name="Waki K."/>
            <person name="Watahiki A."/>
            <person name="Okamura-Oho Y."/>
            <person name="Suzuki H."/>
            <person name="Kawai J."/>
            <person name="Hayashizaki Y."/>
        </authorList>
    </citation>
    <scope>NUCLEOTIDE SEQUENCE [LARGE SCALE MRNA] OF 1-352</scope>
    <source>
        <strain>C57BL/6J</strain>
        <tissue>Head</tissue>
    </source>
</reference>
<reference key="4">
    <citation type="journal article" date="2010" name="Cell">
        <title>A tissue-specific atlas of mouse protein phosphorylation and expression.</title>
        <authorList>
            <person name="Huttlin E.L."/>
            <person name="Jedrychowski M.P."/>
            <person name="Elias J.E."/>
            <person name="Goswami T."/>
            <person name="Rad R."/>
            <person name="Beausoleil S.A."/>
            <person name="Villen J."/>
            <person name="Haas W."/>
            <person name="Sowa M.E."/>
            <person name="Gygi S.P."/>
        </authorList>
    </citation>
    <scope>PHOSPHORYLATION [LARGE SCALE ANALYSIS] AT SER-275 AND SER-277</scope>
    <scope>IDENTIFICATION BY MASS SPECTROMETRY [LARGE SCALE ANALYSIS]</scope>
    <source>
        <tissue>Brain</tissue>
        <tissue>Testis</tissue>
    </source>
</reference>
<reference key="5">
    <citation type="journal article" date="2017" name="J. Med. Genet.">
        <title>GPRASP2, a novel causative gene mutated in an X-linked recessive syndromic hearing loss.</title>
        <authorList>
            <person name="Xing G."/>
            <person name="Yao J."/>
            <person name="Liu C."/>
            <person name="Wei Q."/>
            <person name="Qian X."/>
            <person name="Wu L."/>
            <person name="Lu Y."/>
            <person name="Cao X."/>
        </authorList>
    </citation>
    <scope>TISSUE SPECIFICITY</scope>
</reference>
<gene>
    <name type="primary">Gprasp2</name>
</gene>
<keyword id="KW-0597">Phosphoprotein</keyword>
<keyword id="KW-1185">Reference proteome</keyword>
<organism>
    <name type="scientific">Mus musculus</name>
    <name type="common">Mouse</name>
    <dbReference type="NCBI Taxonomy" id="10090"/>
    <lineage>
        <taxon>Eukaryota</taxon>
        <taxon>Metazoa</taxon>
        <taxon>Chordata</taxon>
        <taxon>Craniata</taxon>
        <taxon>Vertebrata</taxon>
        <taxon>Euteleostomi</taxon>
        <taxon>Mammalia</taxon>
        <taxon>Eutheria</taxon>
        <taxon>Euarchontoglires</taxon>
        <taxon>Glires</taxon>
        <taxon>Rodentia</taxon>
        <taxon>Myomorpha</taxon>
        <taxon>Muroidea</taxon>
        <taxon>Muridae</taxon>
        <taxon>Murinae</taxon>
        <taxon>Mus</taxon>
        <taxon>Mus</taxon>
    </lineage>
</organism>
<comment type="function">
    <text evidence="1">May play a role in regulation of a variety of G-protein coupled receptors.</text>
</comment>
<comment type="subunit">
    <text evidence="1">Interacts with cytoplasmic tails of a variety of G-protein coupled receptors such as muscarinic acetylcholine receptor M1/CHRM1 and calcitonin receptor/CALCR.</text>
</comment>
<comment type="tissue specificity">
    <text evidence="3">Strongly expressed in the brain and the cochlea. Also in lung and muscle tissues. Localized in multiple structures of the cochlea, detected in the spiral ganglion, stria vascularis, spiral ligament, inner and outer hair cells.</text>
</comment>
<comment type="similarity">
    <text evidence="4">Belongs to the GPRASP family.</text>
</comment>
<protein>
    <recommendedName>
        <fullName>G-protein coupled receptor-associated sorting protein 2</fullName>
        <shortName>GASP-2</shortName>
    </recommendedName>
</protein>
<accession>Q8BUY8</accession>
<accession>Q148X7</accession>
<name>GASP2_MOUSE</name>